<proteinExistence type="inferred from homology"/>
<keyword id="KW-0342">GTP-binding</keyword>
<keyword id="KW-0378">Hydrolase</keyword>
<keyword id="KW-0547">Nucleotide-binding</keyword>
<keyword id="KW-1185">Reference proteome</keyword>
<sequence>MAAVQIDDYGPWTTEPAPRRETDLQALQARLFADVADFLGGRDGYAFAGRFDNMVGAATGIAPAAFERLQERIRNRYPVTVSVGIGTARTPADALDAAGTALRDAGSAQDENRQEALSHRSPPGFAGTPGAVTIAHFDVVDATGTYTDTVSPVRAGTEIQGAVTTLAEYLYDTHDAVTQFVGGDNAIAVCPEIDAGIVDDATAHVREAAGVDFQVGVGHGDTPHDAGADAKHALETCRATGARVHGPWTTADD</sequence>
<reference key="1">
    <citation type="journal article" date="2000" name="Proc. Natl. Acad. Sci. U.S.A.">
        <title>Genome sequence of Halobacterium species NRC-1.</title>
        <authorList>
            <person name="Ng W.V."/>
            <person name="Kennedy S.P."/>
            <person name="Mahairas G.G."/>
            <person name="Berquist B."/>
            <person name="Pan M."/>
            <person name="Shukla H.D."/>
            <person name="Lasky S.R."/>
            <person name="Baliga N.S."/>
            <person name="Thorsson V."/>
            <person name="Sbrogna J."/>
            <person name="Swartzell S."/>
            <person name="Weir D."/>
            <person name="Hall J."/>
            <person name="Dahl T.A."/>
            <person name="Welti R."/>
            <person name="Goo Y.A."/>
            <person name="Leithauser B."/>
            <person name="Keller K."/>
            <person name="Cruz R."/>
            <person name="Danson M.J."/>
            <person name="Hough D.W."/>
            <person name="Maddocks D.G."/>
            <person name="Jablonski P.E."/>
            <person name="Krebs M.P."/>
            <person name="Angevine C.M."/>
            <person name="Dale H."/>
            <person name="Isenbarger T.A."/>
            <person name="Peck R.F."/>
            <person name="Pohlschroder M."/>
            <person name="Spudich J.L."/>
            <person name="Jung K.-H."/>
            <person name="Alam M."/>
            <person name="Freitas T."/>
            <person name="Hou S."/>
            <person name="Daniels C.J."/>
            <person name="Dennis P.P."/>
            <person name="Omer A.D."/>
            <person name="Ebhardt H."/>
            <person name="Lowe T.M."/>
            <person name="Liang P."/>
            <person name="Riley M."/>
            <person name="Hood L."/>
            <person name="DasSarma S."/>
        </authorList>
    </citation>
    <scope>NUCLEOTIDE SEQUENCE [LARGE SCALE GENOMIC DNA]</scope>
    <source>
        <strain>ATCC 700922 / JCM 11081 / NRC-1</strain>
    </source>
</reference>
<evidence type="ECO:0000250" key="1"/>
<evidence type="ECO:0000256" key="2">
    <source>
        <dbReference type="SAM" id="MobiDB-lite"/>
    </source>
</evidence>
<evidence type="ECO:0000305" key="3"/>
<organism>
    <name type="scientific">Halobacterium salinarum (strain ATCC 700922 / JCM 11081 / NRC-1)</name>
    <name type="common">Halobacterium halobium</name>
    <dbReference type="NCBI Taxonomy" id="64091"/>
    <lineage>
        <taxon>Archaea</taxon>
        <taxon>Methanobacteriati</taxon>
        <taxon>Methanobacteriota</taxon>
        <taxon>Stenosarchaea group</taxon>
        <taxon>Halobacteria</taxon>
        <taxon>Halobacteriales</taxon>
        <taxon>Halobacteriaceae</taxon>
        <taxon>Halobacterium</taxon>
        <taxon>Halobacterium salinarum NRC-34001</taxon>
    </lineage>
</organism>
<accession>Q9HQS9</accession>
<gene>
    <name type="primary">gch32</name>
    <name type="ordered locus">VNG_1021C</name>
</gene>
<dbReference type="EC" id="3.5.4.29"/>
<dbReference type="EMBL" id="AE004437">
    <property type="protein sequence ID" value="AAG19434.1"/>
    <property type="molecule type" value="Genomic_DNA"/>
</dbReference>
<dbReference type="PIR" id="F84258">
    <property type="entry name" value="F84258"/>
</dbReference>
<dbReference type="RefSeq" id="WP_010902729.1">
    <property type="nucleotide sequence ID" value="NC_002607.1"/>
</dbReference>
<dbReference type="SMR" id="Q9HQS9"/>
<dbReference type="FunCoup" id="Q9HQS9">
    <property type="interactions" value="5"/>
</dbReference>
<dbReference type="STRING" id="64091.VNG_1021C"/>
<dbReference type="PaxDb" id="64091-VNG_1021C"/>
<dbReference type="KEGG" id="hal:VNG_1021C"/>
<dbReference type="PATRIC" id="fig|64091.14.peg.781"/>
<dbReference type="HOGENOM" id="CLU_080076_0_0_2"/>
<dbReference type="InParanoid" id="Q9HQS9"/>
<dbReference type="OrthoDB" id="25211at2157"/>
<dbReference type="PhylomeDB" id="Q9HQS9"/>
<dbReference type="Proteomes" id="UP000000554">
    <property type="component" value="Chromosome"/>
</dbReference>
<dbReference type="GO" id="GO:0005525">
    <property type="term" value="F:GTP binding"/>
    <property type="evidence" value="ECO:0007669"/>
    <property type="project" value="UniProtKB-KW"/>
</dbReference>
<dbReference type="GO" id="GO:0043740">
    <property type="term" value="F:GTP cyclohydrolase IIa activity"/>
    <property type="evidence" value="ECO:0007669"/>
    <property type="project" value="UniProtKB-EC"/>
</dbReference>
<dbReference type="GO" id="GO:0009058">
    <property type="term" value="P:biosynthetic process"/>
    <property type="evidence" value="ECO:0007669"/>
    <property type="project" value="InterPro"/>
</dbReference>
<dbReference type="Gene3D" id="3.30.70.270">
    <property type="match status" value="1"/>
</dbReference>
<dbReference type="Gene3D" id="3.30.70.1230">
    <property type="entry name" value="Nucleotide cyclase"/>
    <property type="match status" value="1"/>
</dbReference>
<dbReference type="HAMAP" id="MF_00608">
    <property type="entry name" value="GTP_cyclohydro_3"/>
    <property type="match status" value="1"/>
</dbReference>
<dbReference type="InterPro" id="IPR007839">
    <property type="entry name" value="GTP_CycHdrlase_3"/>
</dbReference>
<dbReference type="InterPro" id="IPR029787">
    <property type="entry name" value="Nucleotide_cyclase"/>
</dbReference>
<dbReference type="InterPro" id="IPR043128">
    <property type="entry name" value="Rev_trsase/Diguanyl_cyclase"/>
</dbReference>
<dbReference type="NCBIfam" id="NF002587">
    <property type="entry name" value="PRK02240.1"/>
    <property type="match status" value="1"/>
</dbReference>
<dbReference type="PANTHER" id="PTHR42202">
    <property type="entry name" value="GTP CYCLOHYDROLASE III"/>
    <property type="match status" value="1"/>
</dbReference>
<dbReference type="PANTHER" id="PTHR42202:SF1">
    <property type="entry name" value="GTP CYCLOHYDROLASE III"/>
    <property type="match status" value="1"/>
</dbReference>
<dbReference type="Pfam" id="PF05165">
    <property type="entry name" value="GCH_III"/>
    <property type="match status" value="1"/>
</dbReference>
<dbReference type="PIRSF" id="PIRSF009265">
    <property type="entry name" value="GTP_cyclohydro_3"/>
    <property type="match status" value="1"/>
</dbReference>
<feature type="chain" id="PRO_0000145753" description="GTP cyclohydrolase III 2">
    <location>
        <begin position="1"/>
        <end position="253"/>
    </location>
</feature>
<feature type="region of interest" description="Disordered" evidence="2">
    <location>
        <begin position="102"/>
        <end position="125"/>
    </location>
</feature>
<comment type="function">
    <text evidence="1">Catalyzes the formation of 2-amino-5-formylamino-6-ribofuranosylamino-4(3H)-pyrimidinone ribonucleotide monophosphate and inorganic phosphate from GTP. Also has an independent pyrophosphate phosphohydrolase activity (By similarity).</text>
</comment>
<comment type="catalytic activity">
    <reaction>
        <text>GTP + 3 H2O = 2-amino-5-formylamino-6-(5-phospho-D-ribosylamino)pyrimidin-4(3H)-one + 2 phosphate + 2 H(+)</text>
        <dbReference type="Rhea" id="RHEA:22468"/>
        <dbReference type="ChEBI" id="CHEBI:15377"/>
        <dbReference type="ChEBI" id="CHEBI:15378"/>
        <dbReference type="ChEBI" id="CHEBI:37565"/>
        <dbReference type="ChEBI" id="CHEBI:43474"/>
        <dbReference type="ChEBI" id="CHEBI:57258"/>
        <dbReference type="EC" id="3.5.4.29"/>
    </reaction>
</comment>
<comment type="similarity">
    <text evidence="3">Belongs to the archaeal-type GTP cyclohydrolase family.</text>
</comment>
<name>GCH32_HALSA</name>
<protein>
    <recommendedName>
        <fullName>GTP cyclohydrolase III 2</fullName>
        <ecNumber>3.5.4.29</ecNumber>
    </recommendedName>
</protein>